<name>BMNH1_BOMVA</name>
<comment type="function">
    <text>Has antimicrobial and hemolytic activities.</text>
</comment>
<comment type="subcellular location">
    <subcellularLocation>
        <location>Secreted</location>
    </subcellularLocation>
</comment>
<comment type="tissue specificity">
    <text>Expressed by the skin glands.</text>
</comment>
<comment type="similarity">
    <text evidence="2">Belongs to the bombinin family.</text>
</comment>
<sequence length="21" mass="1994">IIGPVLGMVGSALGGLLKKIG</sequence>
<evidence type="ECO:0000269" key="1">
    <source>
    </source>
</evidence>
<evidence type="ECO:0000305" key="2"/>
<organism>
    <name type="scientific">Bombina variegata</name>
    <name type="common">Yellow-bellied toad</name>
    <dbReference type="NCBI Taxonomy" id="8348"/>
    <lineage>
        <taxon>Eukaryota</taxon>
        <taxon>Metazoa</taxon>
        <taxon>Chordata</taxon>
        <taxon>Craniata</taxon>
        <taxon>Vertebrata</taxon>
        <taxon>Euteleostomi</taxon>
        <taxon>Amphibia</taxon>
        <taxon>Batrachia</taxon>
        <taxon>Anura</taxon>
        <taxon>Bombinatoridae</taxon>
        <taxon>Bombina</taxon>
    </lineage>
</organism>
<feature type="peptide" id="PRO_0000003077" description="Bombinin-H1/H3">
    <location>
        <begin position="1"/>
        <end position="20"/>
    </location>
</feature>
<feature type="modified residue" description="D-allo-isoleucine; in form H3" evidence="1">
    <location>
        <position position="2"/>
    </location>
</feature>
<feature type="modified residue" description="Isoleucine amide" evidence="1">
    <location>
        <position position="20"/>
    </location>
</feature>
<reference key="1">
    <citation type="journal article" date="1993" name="EMBO J.">
        <title>Antibacterial and haemolytic peptides containing D-alloisoleucine from the skin of Bombina variegata.</title>
        <authorList>
            <person name="Mignogna G."/>
            <person name="Simmaco M."/>
            <person name="Kreil G."/>
            <person name="Barra D."/>
        </authorList>
    </citation>
    <scope>PROTEIN SEQUENCE</scope>
    <scope>D-AMINO ACID AT ILE-2</scope>
    <scope>AMIDATION AT ILE-20</scope>
    <source>
        <tissue>Skin secretion</tissue>
    </source>
</reference>
<dbReference type="PIR" id="B44581">
    <property type="entry name" value="B44581"/>
</dbReference>
<dbReference type="GO" id="GO:0005576">
    <property type="term" value="C:extracellular region"/>
    <property type="evidence" value="ECO:0007669"/>
    <property type="project" value="UniProtKB-SubCell"/>
</dbReference>
<dbReference type="GO" id="GO:0042742">
    <property type="term" value="P:defense response to bacterium"/>
    <property type="evidence" value="ECO:0007669"/>
    <property type="project" value="UniProtKB-KW"/>
</dbReference>
<dbReference type="GO" id="GO:0031640">
    <property type="term" value="P:killing of cells of another organism"/>
    <property type="evidence" value="ECO:0007669"/>
    <property type="project" value="UniProtKB-KW"/>
</dbReference>
<keyword id="KW-0027">Amidation</keyword>
<keyword id="KW-0878">Amphibian defense peptide</keyword>
<keyword id="KW-0044">Antibiotic</keyword>
<keyword id="KW-0929">Antimicrobial</keyword>
<keyword id="KW-0204">Cytolysis</keyword>
<keyword id="KW-0208">D-amino acid</keyword>
<keyword id="KW-0903">Direct protein sequencing</keyword>
<keyword id="KW-0354">Hemolysis</keyword>
<keyword id="KW-0964">Secreted</keyword>
<accession>P82282</accession>
<accession>P82283</accession>
<proteinExistence type="evidence at protein level"/>
<protein>
    <recommendedName>
        <fullName>Bombinin-H1/H3</fullName>
    </recommendedName>
</protein>